<accession>Q7VL82</accession>
<protein>
    <recommendedName>
        <fullName evidence="1">Uridylate kinase</fullName>
        <shortName evidence="1">UK</shortName>
        <ecNumber evidence="1">2.7.4.22</ecNumber>
    </recommendedName>
    <alternativeName>
        <fullName evidence="1">Uridine monophosphate kinase</fullName>
        <shortName evidence="1">UMP kinase</shortName>
        <shortName evidence="1">UMPK</shortName>
    </alternativeName>
</protein>
<reference key="1">
    <citation type="submission" date="2003-06" db="EMBL/GenBank/DDBJ databases">
        <title>The complete genome sequence of Haemophilus ducreyi.</title>
        <authorList>
            <person name="Munson R.S. Jr."/>
            <person name="Ray W.C."/>
            <person name="Mahairas G."/>
            <person name="Sabo P."/>
            <person name="Mungur R."/>
            <person name="Johnson L."/>
            <person name="Nguyen D."/>
            <person name="Wang J."/>
            <person name="Forst C."/>
            <person name="Hood L."/>
        </authorList>
    </citation>
    <scope>NUCLEOTIDE SEQUENCE [LARGE SCALE GENOMIC DNA]</scope>
    <source>
        <strain>35000HP / ATCC 700724</strain>
    </source>
</reference>
<dbReference type="EC" id="2.7.4.22" evidence="1"/>
<dbReference type="EMBL" id="AE017143">
    <property type="protein sequence ID" value="AAP96377.1"/>
    <property type="molecule type" value="Genomic_DNA"/>
</dbReference>
<dbReference type="RefSeq" id="WP_010945409.1">
    <property type="nucleotide sequence ID" value="NC_002940.2"/>
</dbReference>
<dbReference type="SMR" id="Q7VL82"/>
<dbReference type="STRING" id="233412.HD_1597"/>
<dbReference type="KEGG" id="hdu:HD_1597"/>
<dbReference type="eggNOG" id="COG0528">
    <property type="taxonomic scope" value="Bacteria"/>
</dbReference>
<dbReference type="HOGENOM" id="CLU_033861_0_0_6"/>
<dbReference type="OrthoDB" id="9807458at2"/>
<dbReference type="UniPathway" id="UPA00159">
    <property type="reaction ID" value="UER00275"/>
</dbReference>
<dbReference type="Proteomes" id="UP000001022">
    <property type="component" value="Chromosome"/>
</dbReference>
<dbReference type="GO" id="GO:0005829">
    <property type="term" value="C:cytosol"/>
    <property type="evidence" value="ECO:0007669"/>
    <property type="project" value="TreeGrafter"/>
</dbReference>
<dbReference type="GO" id="GO:0005524">
    <property type="term" value="F:ATP binding"/>
    <property type="evidence" value="ECO:0007669"/>
    <property type="project" value="UniProtKB-KW"/>
</dbReference>
<dbReference type="GO" id="GO:0033862">
    <property type="term" value="F:UMP kinase activity"/>
    <property type="evidence" value="ECO:0007669"/>
    <property type="project" value="UniProtKB-EC"/>
</dbReference>
<dbReference type="GO" id="GO:0044210">
    <property type="term" value="P:'de novo' CTP biosynthetic process"/>
    <property type="evidence" value="ECO:0007669"/>
    <property type="project" value="UniProtKB-UniRule"/>
</dbReference>
<dbReference type="GO" id="GO:0006225">
    <property type="term" value="P:UDP biosynthetic process"/>
    <property type="evidence" value="ECO:0007669"/>
    <property type="project" value="TreeGrafter"/>
</dbReference>
<dbReference type="CDD" id="cd04254">
    <property type="entry name" value="AAK_UMPK-PyrH-Ec"/>
    <property type="match status" value="1"/>
</dbReference>
<dbReference type="FunFam" id="3.40.1160.10:FF:000001">
    <property type="entry name" value="Uridylate kinase"/>
    <property type="match status" value="1"/>
</dbReference>
<dbReference type="Gene3D" id="3.40.1160.10">
    <property type="entry name" value="Acetylglutamate kinase-like"/>
    <property type="match status" value="1"/>
</dbReference>
<dbReference type="HAMAP" id="MF_01220_B">
    <property type="entry name" value="PyrH_B"/>
    <property type="match status" value="1"/>
</dbReference>
<dbReference type="InterPro" id="IPR036393">
    <property type="entry name" value="AceGlu_kinase-like_sf"/>
</dbReference>
<dbReference type="InterPro" id="IPR001048">
    <property type="entry name" value="Asp/Glu/Uridylate_kinase"/>
</dbReference>
<dbReference type="InterPro" id="IPR011817">
    <property type="entry name" value="Uridylate_kinase"/>
</dbReference>
<dbReference type="InterPro" id="IPR015963">
    <property type="entry name" value="Uridylate_kinase_bac"/>
</dbReference>
<dbReference type="NCBIfam" id="TIGR02075">
    <property type="entry name" value="pyrH_bact"/>
    <property type="match status" value="1"/>
</dbReference>
<dbReference type="PANTHER" id="PTHR42833">
    <property type="entry name" value="URIDYLATE KINASE"/>
    <property type="match status" value="1"/>
</dbReference>
<dbReference type="PANTHER" id="PTHR42833:SF4">
    <property type="entry name" value="URIDYLATE KINASE PUMPKIN, CHLOROPLASTIC"/>
    <property type="match status" value="1"/>
</dbReference>
<dbReference type="Pfam" id="PF00696">
    <property type="entry name" value="AA_kinase"/>
    <property type="match status" value="1"/>
</dbReference>
<dbReference type="PIRSF" id="PIRSF005650">
    <property type="entry name" value="Uridylate_kin"/>
    <property type="match status" value="1"/>
</dbReference>
<dbReference type="SUPFAM" id="SSF53633">
    <property type="entry name" value="Carbamate kinase-like"/>
    <property type="match status" value="1"/>
</dbReference>
<name>PYRH_HAEDU</name>
<organism>
    <name type="scientific">Haemophilus ducreyi (strain 35000HP / ATCC 700724)</name>
    <dbReference type="NCBI Taxonomy" id="233412"/>
    <lineage>
        <taxon>Bacteria</taxon>
        <taxon>Pseudomonadati</taxon>
        <taxon>Pseudomonadota</taxon>
        <taxon>Gammaproteobacteria</taxon>
        <taxon>Pasteurellales</taxon>
        <taxon>Pasteurellaceae</taxon>
        <taxon>Haemophilus</taxon>
    </lineage>
</organism>
<sequence>MSKPIYNRILLKLSGEALQGDEGFGIDPSILDRMALEIKELVEMGVEVGVVLGGGNLFRGAKLAKAGMNRVVGDHMGMLATVMNGLAMRDALHRAEVNAKLMSAFQLNGICDTYNWSEAIKMLREKRVVIFSAGTGSPFFTTDSAGCLRGIEIEADVVLKATKVEGVYDKDPSKFNDAKLYNTLTYAEVIDQELKVMDLAAFTLARDHNMPIRVFNMGKPGALREVVMGTTEGTTIS</sequence>
<feature type="chain" id="PRO_0000143846" description="Uridylate kinase">
    <location>
        <begin position="1"/>
        <end position="237"/>
    </location>
</feature>
<feature type="region of interest" description="Involved in allosteric activation by GTP" evidence="1">
    <location>
        <begin position="20"/>
        <end position="25"/>
    </location>
</feature>
<feature type="binding site" evidence="1">
    <location>
        <begin position="12"/>
        <end position="15"/>
    </location>
    <ligand>
        <name>ATP</name>
        <dbReference type="ChEBI" id="CHEBI:30616"/>
    </ligand>
</feature>
<feature type="binding site" evidence="1">
    <location>
        <position position="54"/>
    </location>
    <ligand>
        <name>UMP</name>
        <dbReference type="ChEBI" id="CHEBI:57865"/>
    </ligand>
</feature>
<feature type="binding site" evidence="1">
    <location>
        <position position="55"/>
    </location>
    <ligand>
        <name>ATP</name>
        <dbReference type="ChEBI" id="CHEBI:30616"/>
    </ligand>
</feature>
<feature type="binding site" evidence="1">
    <location>
        <position position="59"/>
    </location>
    <ligand>
        <name>ATP</name>
        <dbReference type="ChEBI" id="CHEBI:30616"/>
    </ligand>
</feature>
<feature type="binding site" evidence="1">
    <location>
        <position position="74"/>
    </location>
    <ligand>
        <name>UMP</name>
        <dbReference type="ChEBI" id="CHEBI:57865"/>
    </ligand>
</feature>
<feature type="binding site" evidence="1">
    <location>
        <begin position="135"/>
        <end position="142"/>
    </location>
    <ligand>
        <name>UMP</name>
        <dbReference type="ChEBI" id="CHEBI:57865"/>
    </ligand>
</feature>
<feature type="binding site" evidence="1">
    <location>
        <position position="162"/>
    </location>
    <ligand>
        <name>ATP</name>
        <dbReference type="ChEBI" id="CHEBI:30616"/>
    </ligand>
</feature>
<feature type="binding site" evidence="1">
    <location>
        <position position="168"/>
    </location>
    <ligand>
        <name>ATP</name>
        <dbReference type="ChEBI" id="CHEBI:30616"/>
    </ligand>
</feature>
<feature type="binding site" evidence="1">
    <location>
        <position position="171"/>
    </location>
    <ligand>
        <name>ATP</name>
        <dbReference type="ChEBI" id="CHEBI:30616"/>
    </ligand>
</feature>
<comment type="function">
    <text evidence="1">Catalyzes the reversible phosphorylation of UMP to UDP.</text>
</comment>
<comment type="catalytic activity">
    <reaction evidence="1">
        <text>UMP + ATP = UDP + ADP</text>
        <dbReference type="Rhea" id="RHEA:24400"/>
        <dbReference type="ChEBI" id="CHEBI:30616"/>
        <dbReference type="ChEBI" id="CHEBI:57865"/>
        <dbReference type="ChEBI" id="CHEBI:58223"/>
        <dbReference type="ChEBI" id="CHEBI:456216"/>
        <dbReference type="EC" id="2.7.4.22"/>
    </reaction>
</comment>
<comment type="activity regulation">
    <text evidence="1">Allosterically activated by GTP. Inhibited by UTP.</text>
</comment>
<comment type="pathway">
    <text evidence="1">Pyrimidine metabolism; CTP biosynthesis via de novo pathway; UDP from UMP (UMPK route): step 1/1.</text>
</comment>
<comment type="subunit">
    <text evidence="1">Homohexamer.</text>
</comment>
<comment type="subcellular location">
    <subcellularLocation>
        <location evidence="1">Cytoplasm</location>
    </subcellularLocation>
</comment>
<comment type="similarity">
    <text evidence="1">Belongs to the UMP kinase family.</text>
</comment>
<evidence type="ECO:0000255" key="1">
    <source>
        <dbReference type="HAMAP-Rule" id="MF_01220"/>
    </source>
</evidence>
<keyword id="KW-0021">Allosteric enzyme</keyword>
<keyword id="KW-0067">ATP-binding</keyword>
<keyword id="KW-0963">Cytoplasm</keyword>
<keyword id="KW-0418">Kinase</keyword>
<keyword id="KW-0547">Nucleotide-binding</keyword>
<keyword id="KW-0665">Pyrimidine biosynthesis</keyword>
<keyword id="KW-1185">Reference proteome</keyword>
<keyword id="KW-0808">Transferase</keyword>
<proteinExistence type="inferred from homology"/>
<gene>
    <name evidence="1" type="primary">pyrH</name>
    <name type="ordered locus">HD_1597</name>
</gene>